<evidence type="ECO:0000255" key="1">
    <source>
        <dbReference type="HAMAP-Rule" id="MF_00017"/>
    </source>
</evidence>
<sequence length="206" mass="22490">MMSHKKQDAFQGLIDALKVLPNVGPKSAQRIAYHLLQHKRKEAEKLVDALQTALKQVYHCAMCNTFCEGGLCDICADETRDGRRLMVVHMPADVSNMEAANCHDGLYFVLMGQINTALGMDVSAIALDRLAQRLGGGEVEEIIIATAFTAEGNATAYVLSEFFKNLPYKVSRLSQGIPLGGELEYVDAGTLAQAVYERRLIKEGGA</sequence>
<name>RECR_NEIMF</name>
<reference key="1">
    <citation type="journal article" date="2007" name="PLoS Genet.">
        <title>Meningococcal genetic variation mechanisms viewed through comparative analysis of serogroup C strain FAM18.</title>
        <authorList>
            <person name="Bentley S.D."/>
            <person name="Vernikos G.S."/>
            <person name="Snyder L.A.S."/>
            <person name="Churcher C."/>
            <person name="Arrowsmith C."/>
            <person name="Chillingworth T."/>
            <person name="Cronin A."/>
            <person name="Davis P.H."/>
            <person name="Holroyd N.E."/>
            <person name="Jagels K."/>
            <person name="Maddison M."/>
            <person name="Moule S."/>
            <person name="Rabbinowitsch E."/>
            <person name="Sharp S."/>
            <person name="Unwin L."/>
            <person name="Whitehead S."/>
            <person name="Quail M.A."/>
            <person name="Achtman M."/>
            <person name="Barrell B.G."/>
            <person name="Saunders N.J."/>
            <person name="Parkhill J."/>
        </authorList>
    </citation>
    <scope>NUCLEOTIDE SEQUENCE [LARGE SCALE GENOMIC DNA]</scope>
    <source>
        <strain>ATCC 700532 / DSM 15464 / FAM18</strain>
    </source>
</reference>
<organism>
    <name type="scientific">Neisseria meningitidis serogroup C / serotype 2a (strain ATCC 700532 / DSM 15464 / FAM18)</name>
    <dbReference type="NCBI Taxonomy" id="272831"/>
    <lineage>
        <taxon>Bacteria</taxon>
        <taxon>Pseudomonadati</taxon>
        <taxon>Pseudomonadota</taxon>
        <taxon>Betaproteobacteria</taxon>
        <taxon>Neisseriales</taxon>
        <taxon>Neisseriaceae</taxon>
        <taxon>Neisseria</taxon>
    </lineage>
</organism>
<keyword id="KW-0227">DNA damage</keyword>
<keyword id="KW-0233">DNA recombination</keyword>
<keyword id="KW-0234">DNA repair</keyword>
<keyword id="KW-0479">Metal-binding</keyword>
<keyword id="KW-0862">Zinc</keyword>
<keyword id="KW-0863">Zinc-finger</keyword>
<comment type="function">
    <text evidence="1">May play a role in DNA repair. It seems to be involved in an RecBC-independent recombinational process of DNA repair. It may act with RecF and RecO.</text>
</comment>
<comment type="similarity">
    <text evidence="1">Belongs to the RecR family.</text>
</comment>
<gene>
    <name evidence="1" type="primary">recR</name>
    <name type="ordered locus">NMC1137</name>
</gene>
<proteinExistence type="inferred from homology"/>
<dbReference type="EMBL" id="AM421808">
    <property type="protein sequence ID" value="CAM10387.1"/>
    <property type="molecule type" value="Genomic_DNA"/>
</dbReference>
<dbReference type="SMR" id="A1KU46"/>
<dbReference type="KEGG" id="nmc:NMC1137"/>
<dbReference type="HOGENOM" id="CLU_060739_1_2_4"/>
<dbReference type="Proteomes" id="UP000002286">
    <property type="component" value="Chromosome"/>
</dbReference>
<dbReference type="GO" id="GO:0003677">
    <property type="term" value="F:DNA binding"/>
    <property type="evidence" value="ECO:0007669"/>
    <property type="project" value="UniProtKB-UniRule"/>
</dbReference>
<dbReference type="GO" id="GO:0008270">
    <property type="term" value="F:zinc ion binding"/>
    <property type="evidence" value="ECO:0007669"/>
    <property type="project" value="UniProtKB-KW"/>
</dbReference>
<dbReference type="GO" id="GO:0006310">
    <property type="term" value="P:DNA recombination"/>
    <property type="evidence" value="ECO:0007669"/>
    <property type="project" value="UniProtKB-UniRule"/>
</dbReference>
<dbReference type="GO" id="GO:0006281">
    <property type="term" value="P:DNA repair"/>
    <property type="evidence" value="ECO:0007669"/>
    <property type="project" value="UniProtKB-UniRule"/>
</dbReference>
<dbReference type="CDD" id="cd01025">
    <property type="entry name" value="TOPRIM_recR"/>
    <property type="match status" value="1"/>
</dbReference>
<dbReference type="Gene3D" id="3.40.1360.10">
    <property type="match status" value="1"/>
</dbReference>
<dbReference type="Gene3D" id="1.10.8.420">
    <property type="entry name" value="RecR Domain 1"/>
    <property type="match status" value="1"/>
</dbReference>
<dbReference type="HAMAP" id="MF_00017">
    <property type="entry name" value="RecR"/>
    <property type="match status" value="1"/>
</dbReference>
<dbReference type="InterPro" id="IPR000093">
    <property type="entry name" value="DNA_Rcmb_RecR"/>
</dbReference>
<dbReference type="InterPro" id="IPR023627">
    <property type="entry name" value="Rcmb_RecR"/>
</dbReference>
<dbReference type="InterPro" id="IPR015967">
    <property type="entry name" value="Rcmb_RecR_Znf"/>
</dbReference>
<dbReference type="InterPro" id="IPR006171">
    <property type="entry name" value="TOPRIM_dom"/>
</dbReference>
<dbReference type="InterPro" id="IPR034137">
    <property type="entry name" value="TOPRIM_RecR"/>
</dbReference>
<dbReference type="NCBIfam" id="TIGR00615">
    <property type="entry name" value="recR"/>
    <property type="match status" value="1"/>
</dbReference>
<dbReference type="PANTHER" id="PTHR30446">
    <property type="entry name" value="RECOMBINATION PROTEIN RECR"/>
    <property type="match status" value="1"/>
</dbReference>
<dbReference type="PANTHER" id="PTHR30446:SF0">
    <property type="entry name" value="RECOMBINATION PROTEIN RECR"/>
    <property type="match status" value="1"/>
</dbReference>
<dbReference type="Pfam" id="PF21175">
    <property type="entry name" value="RecR_C"/>
    <property type="match status" value="1"/>
</dbReference>
<dbReference type="Pfam" id="PF21176">
    <property type="entry name" value="RecR_HhH"/>
    <property type="match status" value="1"/>
</dbReference>
<dbReference type="Pfam" id="PF02132">
    <property type="entry name" value="RecR_ZnF"/>
    <property type="match status" value="1"/>
</dbReference>
<dbReference type="Pfam" id="PF13662">
    <property type="entry name" value="Toprim_4"/>
    <property type="match status" value="1"/>
</dbReference>
<dbReference type="SUPFAM" id="SSF111304">
    <property type="entry name" value="Recombination protein RecR"/>
    <property type="match status" value="1"/>
</dbReference>
<dbReference type="PROSITE" id="PS01300">
    <property type="entry name" value="RECR"/>
    <property type="match status" value="1"/>
</dbReference>
<dbReference type="PROSITE" id="PS50880">
    <property type="entry name" value="TOPRIM"/>
    <property type="match status" value="1"/>
</dbReference>
<accession>A1KU46</accession>
<protein>
    <recommendedName>
        <fullName evidence="1">Recombination protein RecR</fullName>
    </recommendedName>
</protein>
<feature type="chain" id="PRO_1000001567" description="Recombination protein RecR">
    <location>
        <begin position="1"/>
        <end position="206"/>
    </location>
</feature>
<feature type="domain" description="Toprim" evidence="1">
    <location>
        <begin position="83"/>
        <end position="178"/>
    </location>
</feature>
<feature type="zinc finger region" description="C4-type" evidence="1">
    <location>
        <begin position="60"/>
        <end position="75"/>
    </location>
</feature>